<gene>
    <name evidence="1" type="primary">glmE</name>
    <name type="ordered locus">FN1855</name>
</gene>
<proteinExistence type="inferred from homology"/>
<accession>Q8RHY5</accession>
<organism>
    <name type="scientific">Fusobacterium nucleatum subsp. nucleatum (strain ATCC 25586 / DSM 15643 / BCRC 10681 / CIP 101130 / JCM 8532 / KCTC 2640 / LMG 13131 / VPI 4355)</name>
    <dbReference type="NCBI Taxonomy" id="190304"/>
    <lineage>
        <taxon>Bacteria</taxon>
        <taxon>Fusobacteriati</taxon>
        <taxon>Fusobacteriota</taxon>
        <taxon>Fusobacteriia</taxon>
        <taxon>Fusobacteriales</taxon>
        <taxon>Fusobacteriaceae</taxon>
        <taxon>Fusobacterium</taxon>
    </lineage>
</organism>
<dbReference type="EC" id="5.4.99.1" evidence="1"/>
<dbReference type="EMBL" id="AE009951">
    <property type="protein sequence ID" value="AAL93954.1"/>
    <property type="molecule type" value="Genomic_DNA"/>
</dbReference>
<dbReference type="RefSeq" id="NP_602655.1">
    <property type="nucleotide sequence ID" value="NC_003454.1"/>
</dbReference>
<dbReference type="RefSeq" id="WP_005902992.1">
    <property type="nucleotide sequence ID" value="NZ_OZ209243.1"/>
</dbReference>
<dbReference type="SMR" id="Q8RHY5"/>
<dbReference type="STRING" id="190304.FN1855"/>
<dbReference type="PaxDb" id="190304-FN1855"/>
<dbReference type="EnsemblBacteria" id="AAL93954">
    <property type="protein sequence ID" value="AAL93954"/>
    <property type="gene ID" value="FN1855"/>
</dbReference>
<dbReference type="KEGG" id="fnu:FN1855"/>
<dbReference type="PATRIC" id="fig|190304.8.peg.331"/>
<dbReference type="eggNOG" id="COG4865">
    <property type="taxonomic scope" value="Bacteria"/>
</dbReference>
<dbReference type="HOGENOM" id="CLU_029922_0_0_0"/>
<dbReference type="InParanoid" id="Q8RHY5"/>
<dbReference type="BioCyc" id="FNUC190304:G1FZS-352-MONOMER"/>
<dbReference type="UniPathway" id="UPA00561">
    <property type="reaction ID" value="UER00617"/>
</dbReference>
<dbReference type="Proteomes" id="UP000002521">
    <property type="component" value="Chromosome"/>
</dbReference>
<dbReference type="GO" id="GO:0031419">
    <property type="term" value="F:cobalamin binding"/>
    <property type="evidence" value="ECO:0007669"/>
    <property type="project" value="UniProtKB-KW"/>
</dbReference>
<dbReference type="GO" id="GO:0050097">
    <property type="term" value="F:methylaspartate mutase activity"/>
    <property type="evidence" value="ECO:0007669"/>
    <property type="project" value="UniProtKB-UniRule"/>
</dbReference>
<dbReference type="GO" id="GO:0019670">
    <property type="term" value="P:anaerobic glutamate catabolic process"/>
    <property type="evidence" value="ECO:0007669"/>
    <property type="project" value="InterPro"/>
</dbReference>
<dbReference type="GO" id="GO:0019553">
    <property type="term" value="P:glutamate catabolic process via L-citramalate"/>
    <property type="evidence" value="ECO:0007669"/>
    <property type="project" value="UniProtKB-UniRule"/>
</dbReference>
<dbReference type="CDD" id="cd00245">
    <property type="entry name" value="Glm_e"/>
    <property type="match status" value="1"/>
</dbReference>
<dbReference type="Gene3D" id="3.90.970.10">
    <property type="match status" value="1"/>
</dbReference>
<dbReference type="Gene3D" id="3.20.20.240">
    <property type="entry name" value="Methylmalonyl-CoA mutase"/>
    <property type="match status" value="1"/>
</dbReference>
<dbReference type="HAMAP" id="MF_01923">
    <property type="entry name" value="Me_Asp_mutase_E"/>
    <property type="match status" value="1"/>
</dbReference>
<dbReference type="InterPro" id="IPR016176">
    <property type="entry name" value="Cbl-dep_enz_cat"/>
</dbReference>
<dbReference type="InterPro" id="IPR006396">
    <property type="entry name" value="Glu_mut_E"/>
</dbReference>
<dbReference type="InterPro" id="IPR014714">
    <property type="entry name" value="Glu_mut_E_C_dom_sf"/>
</dbReference>
<dbReference type="NCBIfam" id="TIGR01503">
    <property type="entry name" value="MthylAspMut_E"/>
    <property type="match status" value="1"/>
</dbReference>
<dbReference type="Pfam" id="PF06368">
    <property type="entry name" value="Met_asp_mut_E"/>
    <property type="match status" value="1"/>
</dbReference>
<dbReference type="PIRSF" id="PIRSF001495">
    <property type="entry name" value="Met_asp_mut_epsi"/>
    <property type="match status" value="1"/>
</dbReference>
<dbReference type="SUPFAM" id="SSF51703">
    <property type="entry name" value="Cobalamin (vitamin B12)-dependent enzymes"/>
    <property type="match status" value="1"/>
</dbReference>
<feature type="chain" id="PRO_0000429444" description="Glutamate mutase epsilon subunit">
    <location>
        <begin position="1"/>
        <end position="485"/>
    </location>
</feature>
<feature type="binding site" evidence="1">
    <location>
        <position position="100"/>
    </location>
    <ligand>
        <name>L-glutamate</name>
        <dbReference type="ChEBI" id="CHEBI:29985"/>
    </ligand>
</feature>
<feature type="binding site" evidence="1">
    <location>
        <position position="123"/>
    </location>
    <ligand>
        <name>adenosylcob(III)alamin</name>
        <dbReference type="ChEBI" id="CHEBI:18408"/>
    </ligand>
</feature>
<feature type="binding site" evidence="1">
    <location>
        <begin position="149"/>
        <end position="150"/>
    </location>
    <ligand>
        <name>L-glutamate</name>
        <dbReference type="ChEBI" id="CHEBI:29985"/>
    </ligand>
</feature>
<feature type="binding site" evidence="1">
    <location>
        <position position="171"/>
    </location>
    <ligand>
        <name>L-glutamate</name>
        <dbReference type="ChEBI" id="CHEBI:29985"/>
    </ligand>
</feature>
<feature type="binding site" evidence="1">
    <location>
        <position position="180"/>
    </location>
    <ligand>
        <name>adenosylcob(III)alamin</name>
        <dbReference type="ChEBI" id="CHEBI:18408"/>
    </ligand>
</feature>
<feature type="binding site" evidence="1">
    <location>
        <position position="297"/>
    </location>
    <ligand>
        <name>adenosylcob(III)alamin</name>
        <dbReference type="ChEBI" id="CHEBI:18408"/>
    </ligand>
</feature>
<feature type="binding site" evidence="1">
    <location>
        <position position="326"/>
    </location>
    <ligand>
        <name>adenosylcob(III)alamin</name>
        <dbReference type="ChEBI" id="CHEBI:18408"/>
    </ligand>
</feature>
<feature type="binding site" evidence="1">
    <location>
        <position position="330"/>
    </location>
    <ligand>
        <name>adenosylcob(III)alamin</name>
        <dbReference type="ChEBI" id="CHEBI:18408"/>
    </ligand>
</feature>
<comment type="function">
    <text evidence="1">Catalyzes the carbon skeleton rearrangement of L-glutamate to L-threo-3-methylaspartate ((2S,3S)-3-methylaspartate).</text>
</comment>
<comment type="catalytic activity">
    <reaction evidence="1">
        <text>(2S,3S)-3-methyl-L-aspartate = L-glutamate</text>
        <dbReference type="Rhea" id="RHEA:12857"/>
        <dbReference type="ChEBI" id="CHEBI:29985"/>
        <dbReference type="ChEBI" id="CHEBI:58724"/>
        <dbReference type="EC" id="5.4.99.1"/>
    </reaction>
</comment>
<comment type="cofactor">
    <cofactor evidence="1">
        <name>adenosylcob(III)alamin</name>
        <dbReference type="ChEBI" id="CHEBI:18408"/>
    </cofactor>
</comment>
<comment type="pathway">
    <text evidence="1">Amino-acid degradation; L-glutamate degradation via mesaconate pathway; acetate and pyruvate from L-glutamate: step 1/4.</text>
</comment>
<comment type="subunit">
    <text evidence="1">Heterotetramer composed of 2 epsilon subunits (GlmE) and 2 sigma subunits (GlmS). GlmE exists as a homodimer and GlmS as a monomer.</text>
</comment>
<comment type="similarity">
    <text evidence="1">Belongs to the methylaspartate mutase GlmE subunit family.</text>
</comment>
<reference key="1">
    <citation type="journal article" date="2002" name="J. Bacteriol.">
        <title>Genome sequence and analysis of the oral bacterium Fusobacterium nucleatum strain ATCC 25586.</title>
        <authorList>
            <person name="Kapatral V."/>
            <person name="Anderson I."/>
            <person name="Ivanova N."/>
            <person name="Reznik G."/>
            <person name="Los T."/>
            <person name="Lykidis A."/>
            <person name="Bhattacharyya A."/>
            <person name="Bartman A."/>
            <person name="Gardner W."/>
            <person name="Grechkin G."/>
            <person name="Zhu L."/>
            <person name="Vasieva O."/>
            <person name="Chu L."/>
            <person name="Kogan Y."/>
            <person name="Chaga O."/>
            <person name="Goltsman E."/>
            <person name="Bernal A."/>
            <person name="Larsen N."/>
            <person name="D'Souza M."/>
            <person name="Walunas T."/>
            <person name="Pusch G."/>
            <person name="Haselkorn R."/>
            <person name="Fonstein M."/>
            <person name="Kyrpides N.C."/>
            <person name="Overbeek R."/>
        </authorList>
    </citation>
    <scope>NUCLEOTIDE SEQUENCE [LARGE SCALE GENOMIC DNA]</scope>
    <source>
        <strain>ATCC 25586 / DSM 15643 / BCRC 10681 / CIP 101130 / JCM 8532 / KCTC 2640 / LMG 13131 / VPI 4355</strain>
    </source>
</reference>
<protein>
    <recommendedName>
        <fullName evidence="1">Glutamate mutase epsilon subunit</fullName>
        <ecNumber evidence="1">5.4.99.1</ecNumber>
    </recommendedName>
    <alternativeName>
        <fullName evidence="1">Glutamate mutase E chain</fullName>
    </alternativeName>
    <alternativeName>
        <fullName evidence="1">Glutamate mutase large subunit</fullName>
    </alternativeName>
    <alternativeName>
        <fullName evidence="1">Methylaspartate mutase</fullName>
    </alternativeName>
</protein>
<evidence type="ECO:0000255" key="1">
    <source>
        <dbReference type="HAMAP-Rule" id="MF_01923"/>
    </source>
</evidence>
<name>GLME_FUSNN</name>
<keyword id="KW-0846">Cobalamin</keyword>
<keyword id="KW-0170">Cobalt</keyword>
<keyword id="KW-0413">Isomerase</keyword>
<keyword id="KW-1185">Reference proteome</keyword>
<sequence length="485" mass="55431">MPITFKKIDKEDFLEIRKNFLENYKNLDDFDLNTAIRFHKSLPDHKNFQKKIEQSVQDNKIMTQAHSKETLLEDLIKNLNTFYRVGQADFLSIIIDSHTRENHYDNAKVILEDSIKSNKSLLNGFPLINYGTKLARKIINDVEVPLQIKHGSPDARLLVEVALLSGFSAFDGGGISHNIPFSKSISLKDSLENWKYVDRLVGIYEENGIKINREIFSPLTATLVPPAISNSIQILETLLAVEQGVKNISIGVAQYGNITQDIASLLALKEHIQFYLDTFSFKDINISTVFNQWIGGFPEEELKAYSLISYSTTIALFSKTNRIFVKNIDEYAKNSLGNTMINSLLLTKTILDIGNNQKINNYEEIIFEKEQIKKETAQIIAKIFSRCDGDLRKAIIEAFEYGVLDVPFAPSKYNLGKMMPARDSEGMIRYLDIGNLPFCPLIEEFHNKKIKERSMKENREINFQMTIDDIFAMSQGKLINKKSRE</sequence>